<accession>P0C1S8</accession>
<reference key="1">
    <citation type="journal article" date="2000" name="Genes Cells">
        <title>Identification and characterization of human Wee1B, a new member of the Wee1 family of Cdk-inhibitory kinases.</title>
        <authorList>
            <person name="Nakanishi M."/>
            <person name="Ando H."/>
            <person name="Watanabe N."/>
            <person name="Kitamura K."/>
            <person name="Ito K."/>
            <person name="Okayama H."/>
            <person name="Miyamoto T."/>
            <person name="Agui T."/>
            <person name="Sasaki M."/>
        </authorList>
    </citation>
    <scope>NUCLEOTIDE SEQUENCE [MRNA]</scope>
    <scope>TISSUE SPECIFICITY</scope>
    <scope>SUBCELLULAR LOCATION</scope>
</reference>
<reference key="2">
    <citation type="journal article" date="2004" name="Nat. Genet.">
        <title>Complete sequencing and characterization of 21,243 full-length human cDNAs.</title>
        <authorList>
            <person name="Ota T."/>
            <person name="Suzuki Y."/>
            <person name="Nishikawa T."/>
            <person name="Otsuki T."/>
            <person name="Sugiyama T."/>
            <person name="Irie R."/>
            <person name="Wakamatsu A."/>
            <person name="Hayashi K."/>
            <person name="Sato H."/>
            <person name="Nagai K."/>
            <person name="Kimura K."/>
            <person name="Makita H."/>
            <person name="Sekine M."/>
            <person name="Obayashi M."/>
            <person name="Nishi T."/>
            <person name="Shibahara T."/>
            <person name="Tanaka T."/>
            <person name="Ishii S."/>
            <person name="Yamamoto J."/>
            <person name="Saito K."/>
            <person name="Kawai Y."/>
            <person name="Isono Y."/>
            <person name="Nakamura Y."/>
            <person name="Nagahari K."/>
            <person name="Murakami K."/>
            <person name="Yasuda T."/>
            <person name="Iwayanagi T."/>
            <person name="Wagatsuma M."/>
            <person name="Shiratori A."/>
            <person name="Sudo H."/>
            <person name="Hosoiri T."/>
            <person name="Kaku Y."/>
            <person name="Kodaira H."/>
            <person name="Kondo H."/>
            <person name="Sugawara M."/>
            <person name="Takahashi M."/>
            <person name="Kanda K."/>
            <person name="Yokoi T."/>
            <person name="Furuya T."/>
            <person name="Kikkawa E."/>
            <person name="Omura Y."/>
            <person name="Abe K."/>
            <person name="Kamihara K."/>
            <person name="Katsuta N."/>
            <person name="Sato K."/>
            <person name="Tanikawa M."/>
            <person name="Yamazaki M."/>
            <person name="Ninomiya K."/>
            <person name="Ishibashi T."/>
            <person name="Yamashita H."/>
            <person name="Murakawa K."/>
            <person name="Fujimori K."/>
            <person name="Tanai H."/>
            <person name="Kimata M."/>
            <person name="Watanabe M."/>
            <person name="Hiraoka S."/>
            <person name="Chiba Y."/>
            <person name="Ishida S."/>
            <person name="Ono Y."/>
            <person name="Takiguchi S."/>
            <person name="Watanabe S."/>
            <person name="Yosida M."/>
            <person name="Hotuta T."/>
            <person name="Kusano J."/>
            <person name="Kanehori K."/>
            <person name="Takahashi-Fujii A."/>
            <person name="Hara H."/>
            <person name="Tanase T.-O."/>
            <person name="Nomura Y."/>
            <person name="Togiya S."/>
            <person name="Komai F."/>
            <person name="Hara R."/>
            <person name="Takeuchi K."/>
            <person name="Arita M."/>
            <person name="Imose N."/>
            <person name="Musashino K."/>
            <person name="Yuuki H."/>
            <person name="Oshima A."/>
            <person name="Sasaki N."/>
            <person name="Aotsuka S."/>
            <person name="Yoshikawa Y."/>
            <person name="Matsunawa H."/>
            <person name="Ichihara T."/>
            <person name="Shiohata N."/>
            <person name="Sano S."/>
            <person name="Moriya S."/>
            <person name="Momiyama H."/>
            <person name="Satoh N."/>
            <person name="Takami S."/>
            <person name="Terashima Y."/>
            <person name="Suzuki O."/>
            <person name="Nakagawa S."/>
            <person name="Senoh A."/>
            <person name="Mizoguchi H."/>
            <person name="Goto Y."/>
            <person name="Shimizu F."/>
            <person name="Wakebe H."/>
            <person name="Hishigaki H."/>
            <person name="Watanabe T."/>
            <person name="Sugiyama A."/>
            <person name="Takemoto M."/>
            <person name="Kawakami B."/>
            <person name="Yamazaki M."/>
            <person name="Watanabe K."/>
            <person name="Kumagai A."/>
            <person name="Itakura S."/>
            <person name="Fukuzumi Y."/>
            <person name="Fujimori Y."/>
            <person name="Komiyama M."/>
            <person name="Tashiro H."/>
            <person name="Tanigami A."/>
            <person name="Fujiwara T."/>
            <person name="Ono T."/>
            <person name="Yamada K."/>
            <person name="Fujii Y."/>
            <person name="Ozaki K."/>
            <person name="Hirao M."/>
            <person name="Ohmori Y."/>
            <person name="Kawabata A."/>
            <person name="Hikiji T."/>
            <person name="Kobatake N."/>
            <person name="Inagaki H."/>
            <person name="Ikema Y."/>
            <person name="Okamoto S."/>
            <person name="Okitani R."/>
            <person name="Kawakami T."/>
            <person name="Noguchi S."/>
            <person name="Itoh T."/>
            <person name="Shigeta K."/>
            <person name="Senba T."/>
            <person name="Matsumura K."/>
            <person name="Nakajima Y."/>
            <person name="Mizuno T."/>
            <person name="Morinaga M."/>
            <person name="Sasaki M."/>
            <person name="Togashi T."/>
            <person name="Oyama M."/>
            <person name="Hata H."/>
            <person name="Watanabe M."/>
            <person name="Komatsu T."/>
            <person name="Mizushima-Sugano J."/>
            <person name="Satoh T."/>
            <person name="Shirai Y."/>
            <person name="Takahashi Y."/>
            <person name="Nakagawa K."/>
            <person name="Okumura K."/>
            <person name="Nagase T."/>
            <person name="Nomura N."/>
            <person name="Kikuchi H."/>
            <person name="Masuho Y."/>
            <person name="Yamashita R."/>
            <person name="Nakai K."/>
            <person name="Yada T."/>
            <person name="Nakamura Y."/>
            <person name="Ohara O."/>
            <person name="Isogai T."/>
            <person name="Sugano S."/>
        </authorList>
    </citation>
    <scope>NUCLEOTIDE SEQUENCE [LARGE SCALE MRNA]</scope>
    <source>
        <tissue>Thymus</tissue>
    </source>
</reference>
<reference key="3">
    <citation type="journal article" date="2003" name="Nature">
        <title>The DNA sequence of human chromosome 7.</title>
        <authorList>
            <person name="Hillier L.W."/>
            <person name="Fulton R.S."/>
            <person name="Fulton L.A."/>
            <person name="Graves T.A."/>
            <person name="Pepin K.H."/>
            <person name="Wagner-McPherson C."/>
            <person name="Layman D."/>
            <person name="Maas J."/>
            <person name="Jaeger S."/>
            <person name="Walker R."/>
            <person name="Wylie K."/>
            <person name="Sekhon M."/>
            <person name="Becker M.C."/>
            <person name="O'Laughlin M.D."/>
            <person name="Schaller M.E."/>
            <person name="Fewell G.A."/>
            <person name="Delehaunty K.D."/>
            <person name="Miner T.L."/>
            <person name="Nash W.E."/>
            <person name="Cordes M."/>
            <person name="Du H."/>
            <person name="Sun H."/>
            <person name="Edwards J."/>
            <person name="Bradshaw-Cordum H."/>
            <person name="Ali J."/>
            <person name="Andrews S."/>
            <person name="Isak A."/>
            <person name="Vanbrunt A."/>
            <person name="Nguyen C."/>
            <person name="Du F."/>
            <person name="Lamar B."/>
            <person name="Courtney L."/>
            <person name="Kalicki J."/>
            <person name="Ozersky P."/>
            <person name="Bielicki L."/>
            <person name="Scott K."/>
            <person name="Holmes A."/>
            <person name="Harkins R."/>
            <person name="Harris A."/>
            <person name="Strong C.M."/>
            <person name="Hou S."/>
            <person name="Tomlinson C."/>
            <person name="Dauphin-Kohlberg S."/>
            <person name="Kozlowicz-Reilly A."/>
            <person name="Leonard S."/>
            <person name="Rohlfing T."/>
            <person name="Rock S.M."/>
            <person name="Tin-Wollam A.-M."/>
            <person name="Abbott A."/>
            <person name="Minx P."/>
            <person name="Maupin R."/>
            <person name="Strowmatt C."/>
            <person name="Latreille P."/>
            <person name="Miller N."/>
            <person name="Johnson D."/>
            <person name="Murray J."/>
            <person name="Woessner J.P."/>
            <person name="Wendl M.C."/>
            <person name="Yang S.-P."/>
            <person name="Schultz B.R."/>
            <person name="Wallis J.W."/>
            <person name="Spieth J."/>
            <person name="Bieri T.A."/>
            <person name="Nelson J.O."/>
            <person name="Berkowicz N."/>
            <person name="Wohldmann P.E."/>
            <person name="Cook L.L."/>
            <person name="Hickenbotham M.T."/>
            <person name="Eldred J."/>
            <person name="Williams D."/>
            <person name="Bedell J.A."/>
            <person name="Mardis E.R."/>
            <person name="Clifton S.W."/>
            <person name="Chissoe S.L."/>
            <person name="Marra M.A."/>
            <person name="Raymond C."/>
            <person name="Haugen E."/>
            <person name="Gillett W."/>
            <person name="Zhou Y."/>
            <person name="James R."/>
            <person name="Phelps K."/>
            <person name="Iadanoto S."/>
            <person name="Bubb K."/>
            <person name="Simms E."/>
            <person name="Levy R."/>
            <person name="Clendenning J."/>
            <person name="Kaul R."/>
            <person name="Kent W.J."/>
            <person name="Furey T.S."/>
            <person name="Baertsch R.A."/>
            <person name="Brent M.R."/>
            <person name="Keibler E."/>
            <person name="Flicek P."/>
            <person name="Bork P."/>
            <person name="Suyama M."/>
            <person name="Bailey J.A."/>
            <person name="Portnoy M.E."/>
            <person name="Torrents D."/>
            <person name="Chinwalla A.T."/>
            <person name="Gish W.R."/>
            <person name="Eddy S.R."/>
            <person name="McPherson J.D."/>
            <person name="Olson M.V."/>
            <person name="Eichler E.E."/>
            <person name="Green E.D."/>
            <person name="Waterston R.H."/>
            <person name="Wilson R.K."/>
        </authorList>
    </citation>
    <scope>NUCLEOTIDE SEQUENCE [LARGE SCALE GENOMIC DNA]</scope>
</reference>
<reference key="4">
    <citation type="journal article" date="2007" name="Nature">
        <title>Patterns of somatic mutation in human cancer genomes.</title>
        <authorList>
            <person name="Greenman C."/>
            <person name="Stephens P."/>
            <person name="Smith R."/>
            <person name="Dalgliesh G.L."/>
            <person name="Hunter C."/>
            <person name="Bignell G."/>
            <person name="Davies H."/>
            <person name="Teague J."/>
            <person name="Butler A."/>
            <person name="Stevens C."/>
            <person name="Edkins S."/>
            <person name="O'Meara S."/>
            <person name="Vastrik I."/>
            <person name="Schmidt E.E."/>
            <person name="Avis T."/>
            <person name="Barthorpe S."/>
            <person name="Bhamra G."/>
            <person name="Buck G."/>
            <person name="Choudhury B."/>
            <person name="Clements J."/>
            <person name="Cole J."/>
            <person name="Dicks E."/>
            <person name="Forbes S."/>
            <person name="Gray K."/>
            <person name="Halliday K."/>
            <person name="Harrison R."/>
            <person name="Hills K."/>
            <person name="Hinton J."/>
            <person name="Jenkinson A."/>
            <person name="Jones D."/>
            <person name="Menzies A."/>
            <person name="Mironenko T."/>
            <person name="Perry J."/>
            <person name="Raine K."/>
            <person name="Richardson D."/>
            <person name="Shepherd R."/>
            <person name="Small A."/>
            <person name="Tofts C."/>
            <person name="Varian J."/>
            <person name="Webb T."/>
            <person name="West S."/>
            <person name="Widaa S."/>
            <person name="Yates A."/>
            <person name="Cahill D.P."/>
            <person name="Louis D.N."/>
            <person name="Goldstraw P."/>
            <person name="Nicholson A.G."/>
            <person name="Brasseur F."/>
            <person name="Looijenga L."/>
            <person name="Weber B.L."/>
            <person name="Chiew Y.-E."/>
            <person name="DeFazio A."/>
            <person name="Greaves M.F."/>
            <person name="Green A.R."/>
            <person name="Campbell P."/>
            <person name="Birney E."/>
            <person name="Easton D.F."/>
            <person name="Chenevix-Trench G."/>
            <person name="Tan M.-H."/>
            <person name="Khoo S.K."/>
            <person name="Teh B.T."/>
            <person name="Yuen S.T."/>
            <person name="Leung S.Y."/>
            <person name="Wooster R."/>
            <person name="Futreal P.A."/>
            <person name="Stratton M.R."/>
        </authorList>
    </citation>
    <scope>VARIANTS [LARGE SCALE ANALYSIS] THR-8; LYS-332; HIS-398; GLU-470 AND ASP-526</scope>
</reference>
<reference key="5">
    <citation type="journal article" date="2018" name="Am. J. Hum. Genet.">
        <title>Homozygous Mutations in WEE2 Cause Fertilization Failure and Female Infertility.</title>
        <authorList>
            <person name="Sang Q."/>
            <person name="Li B."/>
            <person name="Kuang Y."/>
            <person name="Wang X."/>
            <person name="Zhang Z."/>
            <person name="Chen B."/>
            <person name="Wu L."/>
            <person name="Lyu Q."/>
            <person name="Fu Y."/>
            <person name="Yan Z."/>
            <person name="Mao X."/>
            <person name="Xu Y."/>
            <person name="Mu J."/>
            <person name="Li Q."/>
            <person name="Jin L."/>
            <person name="He L."/>
            <person name="Wang L."/>
        </authorList>
    </citation>
    <scope>INVOLVEMENT IN OZEMA5</scope>
    <scope>VARIANT OZEMA5 HIS-234</scope>
    <scope>CHARACTERIZATION OF VARIANT OZEMA5 HIS-234</scope>
    <scope>FUNCTION</scope>
    <scope>SUBCELLULAR LOCATION</scope>
    <scope>TISSUE SPECIFICITY</scope>
    <scope>PHOSPHORYLATION</scope>
</reference>
<protein>
    <recommendedName>
        <fullName>Wee1-like protein kinase 2</fullName>
        <ecNumber>2.7.10.2</ecNumber>
    </recommendedName>
    <alternativeName>
        <fullName>Wee1-like protein kinase 1B</fullName>
    </alternativeName>
    <alternativeName>
        <fullName>Wee1B kinase</fullName>
    </alternativeName>
</protein>
<organism>
    <name type="scientific">Homo sapiens</name>
    <name type="common">Human</name>
    <dbReference type="NCBI Taxonomy" id="9606"/>
    <lineage>
        <taxon>Eukaryota</taxon>
        <taxon>Metazoa</taxon>
        <taxon>Chordata</taxon>
        <taxon>Craniata</taxon>
        <taxon>Vertebrata</taxon>
        <taxon>Euteleostomi</taxon>
        <taxon>Mammalia</taxon>
        <taxon>Eutheria</taxon>
        <taxon>Euarchontoglires</taxon>
        <taxon>Primates</taxon>
        <taxon>Haplorrhini</taxon>
        <taxon>Catarrhini</taxon>
        <taxon>Hominidae</taxon>
        <taxon>Homo</taxon>
    </lineage>
</organism>
<dbReference type="EC" id="2.7.10.2"/>
<dbReference type="EMBL" id="AK131218">
    <property type="status" value="NOT_ANNOTATED_CDS"/>
    <property type="molecule type" value="mRNA"/>
</dbReference>
<dbReference type="EMBL" id="AC004918">
    <property type="status" value="NOT_ANNOTATED_CDS"/>
    <property type="molecule type" value="Genomic_DNA"/>
</dbReference>
<dbReference type="CCDS" id="CCDS43660.1"/>
<dbReference type="RefSeq" id="NP_001099028.1">
    <property type="nucleotide sequence ID" value="NM_001105558.1"/>
</dbReference>
<dbReference type="PDB" id="5VDK">
    <property type="method" value="X-ray"/>
    <property type="resolution" value="2.70 A"/>
    <property type="chains" value="A=202-492"/>
</dbReference>
<dbReference type="PDBsum" id="5VDK"/>
<dbReference type="SMR" id="P0C1S8"/>
<dbReference type="BioGRID" id="138978">
    <property type="interactions" value="1"/>
</dbReference>
<dbReference type="FunCoup" id="P0C1S8">
    <property type="interactions" value="956"/>
</dbReference>
<dbReference type="STRING" id="9606.ENSP00000380675"/>
<dbReference type="BindingDB" id="P0C1S8"/>
<dbReference type="ChEMBL" id="CHEMBL5095"/>
<dbReference type="DrugCentral" id="P0C1S8"/>
<dbReference type="GlyGen" id="P0C1S8">
    <property type="glycosylation" value="1 site, 1 O-linked glycan (1 site)"/>
</dbReference>
<dbReference type="iPTMnet" id="P0C1S8"/>
<dbReference type="PhosphoSitePlus" id="P0C1S8"/>
<dbReference type="BioMuta" id="WEE2"/>
<dbReference type="DMDM" id="254763343"/>
<dbReference type="jPOST" id="P0C1S8"/>
<dbReference type="MassIVE" id="P0C1S8"/>
<dbReference type="PaxDb" id="9606-ENSP00000380675"/>
<dbReference type="PeptideAtlas" id="P0C1S8"/>
<dbReference type="Antibodypedia" id="32491">
    <property type="antibodies" value="119 antibodies from 24 providers"/>
</dbReference>
<dbReference type="DNASU" id="494551"/>
<dbReference type="Ensembl" id="ENST00000397541.6">
    <property type="protein sequence ID" value="ENSP00000380675.2"/>
    <property type="gene ID" value="ENSG00000214102.7"/>
</dbReference>
<dbReference type="Ensembl" id="ENST00000574659.5">
    <property type="protein sequence ID" value="ENSP00000459392.1"/>
    <property type="gene ID" value="ENSG00000263042.5"/>
</dbReference>
<dbReference type="GeneID" id="494551"/>
<dbReference type="KEGG" id="hsa:494551"/>
<dbReference type="MANE-Select" id="ENST00000397541.6">
    <property type="protein sequence ID" value="ENSP00000380675.2"/>
    <property type="RefSeq nucleotide sequence ID" value="NM_001105558.1"/>
    <property type="RefSeq protein sequence ID" value="NP_001099028.1"/>
</dbReference>
<dbReference type="UCSC" id="uc003vwn.2">
    <property type="organism name" value="human"/>
</dbReference>
<dbReference type="AGR" id="HGNC:19684"/>
<dbReference type="CTD" id="494551"/>
<dbReference type="DisGeNET" id="494551"/>
<dbReference type="GeneCards" id="WEE2"/>
<dbReference type="HGNC" id="HGNC:19684">
    <property type="gene designation" value="WEE2"/>
</dbReference>
<dbReference type="HPA" id="ENSG00000214102">
    <property type="expression patterns" value="Not detected"/>
</dbReference>
<dbReference type="MalaCards" id="WEE2"/>
<dbReference type="MIM" id="614084">
    <property type="type" value="gene"/>
</dbReference>
<dbReference type="MIM" id="617996">
    <property type="type" value="phenotype"/>
</dbReference>
<dbReference type="neXtProt" id="NX_P0C1S8"/>
<dbReference type="OpenTargets" id="ENSG00000214102"/>
<dbReference type="Orphanet" id="488191">
    <property type="disease" value="Female infertility due to oocyte meiotic arrest"/>
</dbReference>
<dbReference type="PharmGKB" id="PA134909633"/>
<dbReference type="VEuPathDB" id="HostDB:ENSG00000214102"/>
<dbReference type="eggNOG" id="KOG0601">
    <property type="taxonomic scope" value="Eukaryota"/>
</dbReference>
<dbReference type="GeneTree" id="ENSGT00940000158803"/>
<dbReference type="HOGENOM" id="CLU_000288_25_1_1"/>
<dbReference type="InParanoid" id="P0C1S8"/>
<dbReference type="OMA" id="PLKDEMT"/>
<dbReference type="OrthoDB" id="5337378at2759"/>
<dbReference type="PAN-GO" id="P0C1S8">
    <property type="GO annotations" value="3 GO annotations based on evolutionary models"/>
</dbReference>
<dbReference type="PhylomeDB" id="P0C1S8"/>
<dbReference type="TreeFam" id="TF101088"/>
<dbReference type="PathwayCommons" id="P0C1S8"/>
<dbReference type="SignaLink" id="P0C1S8"/>
<dbReference type="BioGRID-ORCS" id="494551">
    <property type="hits" value="11 hits in 1174 CRISPR screens"/>
</dbReference>
<dbReference type="GenomeRNAi" id="494551"/>
<dbReference type="Pharos" id="P0C1S8">
    <property type="development level" value="Tchem"/>
</dbReference>
<dbReference type="PRO" id="PR:P0C1S8"/>
<dbReference type="Proteomes" id="UP000005640">
    <property type="component" value="Chromosome 7"/>
</dbReference>
<dbReference type="RNAct" id="P0C1S8">
    <property type="molecule type" value="protein"/>
</dbReference>
<dbReference type="Bgee" id="ENSG00000214102">
    <property type="expression patterns" value="Expressed in primordial germ cell in gonad and 83 other cell types or tissues"/>
</dbReference>
<dbReference type="ExpressionAtlas" id="P0C1S8">
    <property type="expression patterns" value="baseline and differential"/>
</dbReference>
<dbReference type="GO" id="GO:0005737">
    <property type="term" value="C:cytoplasm"/>
    <property type="evidence" value="ECO:0000318"/>
    <property type="project" value="GO_Central"/>
</dbReference>
<dbReference type="GO" id="GO:0005829">
    <property type="term" value="C:cytosol"/>
    <property type="evidence" value="ECO:0000314"/>
    <property type="project" value="HPA"/>
</dbReference>
<dbReference type="GO" id="GO:0005654">
    <property type="term" value="C:nucleoplasm"/>
    <property type="evidence" value="ECO:0000314"/>
    <property type="project" value="HPA"/>
</dbReference>
<dbReference type="GO" id="GO:0005634">
    <property type="term" value="C:nucleus"/>
    <property type="evidence" value="ECO:0000318"/>
    <property type="project" value="GO_Central"/>
</dbReference>
<dbReference type="GO" id="GO:0005886">
    <property type="term" value="C:plasma membrane"/>
    <property type="evidence" value="ECO:0000314"/>
    <property type="project" value="HPA"/>
</dbReference>
<dbReference type="GO" id="GO:0005524">
    <property type="term" value="F:ATP binding"/>
    <property type="evidence" value="ECO:0007669"/>
    <property type="project" value="UniProtKB-KW"/>
</dbReference>
<dbReference type="GO" id="GO:0000287">
    <property type="term" value="F:magnesium ion binding"/>
    <property type="evidence" value="ECO:0007669"/>
    <property type="project" value="InterPro"/>
</dbReference>
<dbReference type="GO" id="GO:0004715">
    <property type="term" value="F:non-membrane spanning protein tyrosine kinase activity"/>
    <property type="evidence" value="ECO:0007669"/>
    <property type="project" value="UniProtKB-EC"/>
</dbReference>
<dbReference type="GO" id="GO:0004713">
    <property type="term" value="F:protein tyrosine kinase activity"/>
    <property type="evidence" value="ECO:0000318"/>
    <property type="project" value="GO_Central"/>
</dbReference>
<dbReference type="GO" id="GO:0007143">
    <property type="term" value="P:female meiotic nuclear division"/>
    <property type="evidence" value="ECO:0000250"/>
    <property type="project" value="UniProtKB"/>
</dbReference>
<dbReference type="GO" id="GO:0035038">
    <property type="term" value="P:female pronucleus assembly"/>
    <property type="evidence" value="ECO:0000250"/>
    <property type="project" value="UniProtKB"/>
</dbReference>
<dbReference type="GO" id="GO:0000278">
    <property type="term" value="P:mitotic cell cycle"/>
    <property type="evidence" value="ECO:0007669"/>
    <property type="project" value="InterPro"/>
</dbReference>
<dbReference type="GO" id="GO:1900194">
    <property type="term" value="P:negative regulation of oocyte maturation"/>
    <property type="evidence" value="ECO:0000250"/>
    <property type="project" value="UniProtKB"/>
</dbReference>
<dbReference type="GO" id="GO:0042327">
    <property type="term" value="P:positive regulation of phosphorylation"/>
    <property type="evidence" value="ECO:0007669"/>
    <property type="project" value="Ensembl"/>
</dbReference>
<dbReference type="GO" id="GO:0080154">
    <property type="term" value="P:regulation of fertilization"/>
    <property type="evidence" value="ECO:0007669"/>
    <property type="project" value="Ensembl"/>
</dbReference>
<dbReference type="GO" id="GO:0060631">
    <property type="term" value="P:regulation of meiosis I"/>
    <property type="evidence" value="ECO:0000250"/>
    <property type="project" value="UniProtKB"/>
</dbReference>
<dbReference type="CDD" id="cd14139">
    <property type="entry name" value="PTKc_Wee1b"/>
    <property type="match status" value="1"/>
</dbReference>
<dbReference type="FunFam" id="3.30.200.20:FF:000115">
    <property type="entry name" value="Wee1-like kinase 2"/>
    <property type="match status" value="1"/>
</dbReference>
<dbReference type="FunFam" id="1.10.510.10:FF:000217">
    <property type="entry name" value="Wee1-like protein kinase"/>
    <property type="match status" value="1"/>
</dbReference>
<dbReference type="Gene3D" id="3.30.200.20">
    <property type="entry name" value="Phosphorylase Kinase, domain 1"/>
    <property type="match status" value="1"/>
</dbReference>
<dbReference type="Gene3D" id="1.10.510.10">
    <property type="entry name" value="Transferase(Phosphotransferase) domain 1"/>
    <property type="match status" value="1"/>
</dbReference>
<dbReference type="InterPro" id="IPR050339">
    <property type="entry name" value="CC_SR_Kinase"/>
</dbReference>
<dbReference type="InterPro" id="IPR011009">
    <property type="entry name" value="Kinase-like_dom_sf"/>
</dbReference>
<dbReference type="InterPro" id="IPR000719">
    <property type="entry name" value="Prot_kinase_dom"/>
</dbReference>
<dbReference type="InterPro" id="IPR017441">
    <property type="entry name" value="Protein_kinase_ATP_BS"/>
</dbReference>
<dbReference type="InterPro" id="IPR008271">
    <property type="entry name" value="Ser/Thr_kinase_AS"/>
</dbReference>
<dbReference type="InterPro" id="IPR017164">
    <property type="entry name" value="Wee1-like_protein_kinase"/>
</dbReference>
<dbReference type="PANTHER" id="PTHR11042">
    <property type="entry name" value="EUKARYOTIC TRANSLATION INITIATION FACTOR 2-ALPHA KINASE EIF2-ALPHA KINASE -RELATED"/>
    <property type="match status" value="1"/>
</dbReference>
<dbReference type="PANTHER" id="PTHR11042:SF75">
    <property type="entry name" value="WEE1-LIKE PROTEIN KINASE 2"/>
    <property type="match status" value="1"/>
</dbReference>
<dbReference type="Pfam" id="PF00069">
    <property type="entry name" value="Pkinase"/>
    <property type="match status" value="1"/>
</dbReference>
<dbReference type="PIRSF" id="PIRSF037281">
    <property type="entry name" value="Wee1-like_protein_kinase"/>
    <property type="match status" value="1"/>
</dbReference>
<dbReference type="SMART" id="SM00220">
    <property type="entry name" value="S_TKc"/>
    <property type="match status" value="1"/>
</dbReference>
<dbReference type="SUPFAM" id="SSF56112">
    <property type="entry name" value="Protein kinase-like (PK-like)"/>
    <property type="match status" value="1"/>
</dbReference>
<dbReference type="PROSITE" id="PS00107">
    <property type="entry name" value="PROTEIN_KINASE_ATP"/>
    <property type="match status" value="1"/>
</dbReference>
<dbReference type="PROSITE" id="PS50011">
    <property type="entry name" value="PROTEIN_KINASE_DOM"/>
    <property type="match status" value="1"/>
</dbReference>
<dbReference type="PROSITE" id="PS00108">
    <property type="entry name" value="PROTEIN_KINASE_ST"/>
    <property type="match status" value="1"/>
</dbReference>
<gene>
    <name type="primary">WEE2</name>
    <name type="synonym">WEE1B</name>
</gene>
<name>WEE2_HUMAN</name>
<feature type="chain" id="PRO_0000248079" description="Wee1-like protein kinase 2">
    <location>
        <begin position="1"/>
        <end position="567"/>
    </location>
</feature>
<feature type="domain" description="Protein kinase" evidence="5">
    <location>
        <begin position="212"/>
        <end position="486"/>
    </location>
</feature>
<feature type="region of interest" description="Disordered" evidence="7">
    <location>
        <begin position="1"/>
        <end position="117"/>
    </location>
</feature>
<feature type="region of interest" description="Disordered" evidence="7">
    <location>
        <begin position="514"/>
        <end position="567"/>
    </location>
</feature>
<feature type="coiled-coil region" evidence="4">
    <location>
        <begin position="494"/>
        <end position="519"/>
    </location>
</feature>
<feature type="short sequence motif" description="Nuclear localization signal" evidence="1">
    <location>
        <begin position="173"/>
        <end position="175"/>
    </location>
</feature>
<feature type="short sequence motif" description="Nuclear export signal" evidence="1">
    <location>
        <begin position="315"/>
        <end position="329"/>
    </location>
</feature>
<feature type="compositionally biased region" description="Basic and acidic residues" evidence="7">
    <location>
        <begin position="1"/>
        <end position="12"/>
    </location>
</feature>
<feature type="compositionally biased region" description="Basic and acidic residues" evidence="7">
    <location>
        <begin position="25"/>
        <end position="35"/>
    </location>
</feature>
<feature type="compositionally biased region" description="Basic and acidic residues" evidence="7">
    <location>
        <begin position="42"/>
        <end position="51"/>
    </location>
</feature>
<feature type="compositionally biased region" description="Basic and acidic residues" evidence="7">
    <location>
        <begin position="64"/>
        <end position="77"/>
    </location>
</feature>
<feature type="active site" description="Proton acceptor" evidence="5 6">
    <location>
        <position position="339"/>
    </location>
</feature>
<feature type="binding site" evidence="5">
    <location>
        <begin position="218"/>
        <end position="226"/>
    </location>
    <ligand>
        <name>ATP</name>
        <dbReference type="ChEBI" id="CHEBI:30616"/>
    </ligand>
</feature>
<feature type="binding site" evidence="5">
    <location>
        <position position="241"/>
    </location>
    <ligand>
        <name>ATP</name>
        <dbReference type="ChEBI" id="CHEBI:30616"/>
    </ligand>
</feature>
<feature type="binding site" evidence="1">
    <location>
        <position position="344"/>
    </location>
    <ligand>
        <name>Mg(2+)</name>
        <dbReference type="ChEBI" id="CHEBI:18420"/>
    </ligand>
</feature>
<feature type="binding site" evidence="1">
    <location>
        <position position="380"/>
    </location>
    <ligand>
        <name>Mg(2+)</name>
        <dbReference type="ChEBI" id="CHEBI:18420"/>
    </ligand>
</feature>
<feature type="modified residue" description="Phosphoserine" evidence="2">
    <location>
        <position position="76"/>
    </location>
</feature>
<feature type="sequence variant" id="VAR_041304" description="In dbSNP:rs35672788." evidence="9">
    <original>K</original>
    <variation>T</variation>
    <location>
        <position position="8"/>
    </location>
</feature>
<feature type="sequence variant" id="VAR_080992" description="In OZEMA5; decreased WEE2 phosphorylation at serine residues; decreased CDK1/CDC2 phosphorylation at 'Y-15'; dbSNP:rs1554415096." evidence="10">
    <original>D</original>
    <variation>H</variation>
    <location>
        <position position="234"/>
    </location>
</feature>
<feature type="sequence variant" id="VAR_041305" description="In a gastric adenocarcinoma sample; somatic mutation." evidence="9">
    <original>N</original>
    <variation>K</variation>
    <location>
        <position position="332"/>
    </location>
</feature>
<feature type="sequence variant" id="VAR_041306" description="In an ovarian mucinous carcinoma sample; somatic mutation; dbSNP:rs200610853." evidence="9">
    <original>R</original>
    <variation>H</variation>
    <location>
        <position position="398"/>
    </location>
</feature>
<feature type="sequence variant" id="VAR_041307" description="In dbSNP:rs55901099." evidence="9">
    <original>D</original>
    <variation>E</variation>
    <location>
        <position position="470"/>
    </location>
</feature>
<feature type="sequence variant" id="VAR_041308" description="In dbSNP:rs35683659." evidence="9">
    <original>Y</original>
    <variation>D</variation>
    <location>
        <position position="526"/>
    </location>
</feature>
<feature type="sequence conflict" description="In Ref. 2; AK131218." evidence="11" ref="2">
    <original>M</original>
    <variation>V</variation>
    <location>
        <position position="351"/>
    </location>
</feature>
<feature type="sequence conflict" description="In Ref. 2; AK131218." evidence="11" ref="2">
    <original>H</original>
    <variation>Y</variation>
    <location>
        <position position="529"/>
    </location>
</feature>
<feature type="helix" evidence="12">
    <location>
        <begin position="207"/>
        <end position="211"/>
    </location>
</feature>
<feature type="strand" evidence="12">
    <location>
        <begin position="212"/>
        <end position="221"/>
    </location>
</feature>
<feature type="strand" evidence="12">
    <location>
        <begin position="224"/>
        <end position="231"/>
    </location>
</feature>
<feature type="turn" evidence="12">
    <location>
        <begin position="232"/>
        <end position="234"/>
    </location>
</feature>
<feature type="strand" evidence="12">
    <location>
        <begin position="237"/>
        <end position="245"/>
    </location>
</feature>
<feature type="strand" evidence="12">
    <location>
        <begin position="251"/>
        <end position="253"/>
    </location>
</feature>
<feature type="helix" evidence="12">
    <location>
        <begin position="255"/>
        <end position="265"/>
    </location>
</feature>
<feature type="strand" evidence="12">
    <location>
        <begin position="275"/>
        <end position="281"/>
    </location>
</feature>
<feature type="strand" evidence="12">
    <location>
        <begin position="284"/>
        <end position="290"/>
    </location>
</feature>
<feature type="helix" evidence="12">
    <location>
        <begin position="297"/>
        <end position="306"/>
    </location>
</feature>
<feature type="helix" evidence="12">
    <location>
        <begin position="313"/>
        <end position="332"/>
    </location>
</feature>
<feature type="strand" evidence="12">
    <location>
        <begin position="344"/>
        <end position="348"/>
    </location>
</feature>
<feature type="strand" evidence="12">
    <location>
        <begin position="375"/>
        <end position="378"/>
    </location>
</feature>
<feature type="strand" evidence="12">
    <location>
        <begin position="385"/>
        <end position="389"/>
    </location>
</feature>
<feature type="helix" evidence="12">
    <location>
        <begin position="397"/>
        <end position="399"/>
    </location>
</feature>
<feature type="helix" evidence="12">
    <location>
        <begin position="402"/>
        <end position="405"/>
    </location>
</feature>
<feature type="turn" evidence="12">
    <location>
        <begin position="410"/>
        <end position="412"/>
    </location>
</feature>
<feature type="helix" evidence="12">
    <location>
        <begin position="413"/>
        <end position="428"/>
    </location>
</feature>
<feature type="helix" evidence="12">
    <location>
        <begin position="437"/>
        <end position="443"/>
    </location>
</feature>
<feature type="turn" evidence="12">
    <location>
        <begin position="444"/>
        <end position="446"/>
    </location>
</feature>
<feature type="helix" evidence="12">
    <location>
        <begin position="457"/>
        <end position="467"/>
    </location>
</feature>
<feature type="strand" evidence="12">
    <location>
        <begin position="469"/>
        <end position="471"/>
    </location>
</feature>
<feature type="helix" evidence="12">
    <location>
        <begin position="477"/>
        <end position="481"/>
    </location>
</feature>
<proteinExistence type="evidence at protein level"/>
<sequence>MDDKDIDKELRQKLNFSYCEETEIEGQKKVEESREASSQTPEKGEVQDSEAKGTPPWTPLSNVHELDTSSEKDKESPDQILRTPVSHPLKCPETPAQPDSRSKLLPSDSPSTPKTMLSRLVISPTGKLPSRGPKHLKLTPAPLKDEMTSLALVNINPFTPESYKKLFLQSGGKRKIRGDLEEAGPEEGKGGLPAKRCVLRETNMASRYEKEFLEVEKIGVGEFGTVYKCIKRLDGCVYAIKRSMKTFTELSNENSALHEVYAHAVLGHHPHVVRYYSSWAEDDHMIIQNEYCNGGSLQAAISENTKSGNHFEEPKLKDILLQISLGLNYIHNSSMVHLDIKPSNIFICHKMQSESSGVIEEVENEADWFLSANVMYKIGDLGHATSINKPKVEEGDSRFLANEILQEDYRHLPKADIFALGLTIAVAAGAESLPTNGAAWHHIRKGNFPDVPQELSESFSSLLKNMIQPDAEQRPSAAALARNTVLRPSLGKTEELQQQLNLEKFKTATLERELREAQQAQSPQGYTHHGDTGVSGTHTGSRSTKRLVGGKSARSSSFTSGEREPLH</sequence>
<comment type="function">
    <text evidence="3 10">Oocyte-specific protein tyrosine kinase that phosphorylates and inhibits CDK1/CDC2 and acts as a key regulator of meiosis during both prophase I and metaphase II (PubMed:29606300). Required to maintain meiotic arrest in oocytes during the germinal vesicle (GV) stage, a long period of quiescence at dictyate prophase I, by phosphorylating CDK1 at 'Tyr-15', leading to inhibit CDK1 activity and prevent meiotic reentry. Also required for metaphase II exit during egg activation by phosphorylating CDK1 at 'Tyr-15', to ensure exit from meiosis in oocytes and promote pronuclear formation (By similarity).</text>
</comment>
<comment type="catalytic activity">
    <reaction evidence="6">
        <text>L-tyrosyl-[protein] + ATP = O-phospho-L-tyrosyl-[protein] + ADP + H(+)</text>
        <dbReference type="Rhea" id="RHEA:10596"/>
        <dbReference type="Rhea" id="RHEA-COMP:10136"/>
        <dbReference type="Rhea" id="RHEA-COMP:20101"/>
        <dbReference type="ChEBI" id="CHEBI:15378"/>
        <dbReference type="ChEBI" id="CHEBI:30616"/>
        <dbReference type="ChEBI" id="CHEBI:46858"/>
        <dbReference type="ChEBI" id="CHEBI:61978"/>
        <dbReference type="ChEBI" id="CHEBI:456216"/>
        <dbReference type="EC" id="2.7.10.2"/>
    </reaction>
</comment>
<comment type="subcellular location">
    <subcellularLocation>
        <location evidence="8 10">Nucleus</location>
    </subcellularLocation>
</comment>
<comment type="tissue specificity">
    <text evidence="8 10">Expressed in oocytes (at protein level) (PubMed:29606300). May also be expressed in testis (PubMed:11029659).</text>
</comment>
<comment type="PTM">
    <text evidence="3 10">Phosphorylated on serine residues (PubMed:29606300). Phosphorylation leads to increase its activity (By similarity).</text>
</comment>
<comment type="disease" evidence="10">
    <disease id="DI-05264">
        <name>Oocyte/zygote/embryo maturation arrest 5</name>
        <acronym>OZEMA5</acronym>
        <description>An autosomal recessive infertility disorder characterized by oocyte inability to exit metaphase II, resulting in fertilization failure.</description>
        <dbReference type="MIM" id="617996"/>
    </disease>
    <text>The disease is caused by variants affecting the gene represented in this entry.</text>
</comment>
<comment type="similarity">
    <text evidence="5">Belongs to the protein kinase superfamily. Ser/Thr protein kinase family. WEE1 subfamily.</text>
</comment>
<evidence type="ECO:0000250" key="1"/>
<evidence type="ECO:0000250" key="2">
    <source>
        <dbReference type="UniProtKB" id="A4PES0"/>
    </source>
</evidence>
<evidence type="ECO:0000250" key="3">
    <source>
        <dbReference type="UniProtKB" id="Q66JT0"/>
    </source>
</evidence>
<evidence type="ECO:0000255" key="4"/>
<evidence type="ECO:0000255" key="5">
    <source>
        <dbReference type="PROSITE-ProRule" id="PRU00159"/>
    </source>
</evidence>
<evidence type="ECO:0000255" key="6">
    <source>
        <dbReference type="PROSITE-ProRule" id="PRU10027"/>
    </source>
</evidence>
<evidence type="ECO:0000256" key="7">
    <source>
        <dbReference type="SAM" id="MobiDB-lite"/>
    </source>
</evidence>
<evidence type="ECO:0000269" key="8">
    <source>
    </source>
</evidence>
<evidence type="ECO:0000269" key="9">
    <source>
    </source>
</evidence>
<evidence type="ECO:0000269" key="10">
    <source>
    </source>
</evidence>
<evidence type="ECO:0000305" key="11"/>
<evidence type="ECO:0007829" key="12">
    <source>
        <dbReference type="PDB" id="5VDK"/>
    </source>
</evidence>
<keyword id="KW-0002">3D-structure</keyword>
<keyword id="KW-0067">ATP-binding</keyword>
<keyword id="KW-0175">Coiled coil</keyword>
<keyword id="KW-0225">Disease variant</keyword>
<keyword id="KW-0418">Kinase</keyword>
<keyword id="KW-0460">Magnesium</keyword>
<keyword id="KW-0469">Meiosis</keyword>
<keyword id="KW-0479">Metal-binding</keyword>
<keyword id="KW-0547">Nucleotide-binding</keyword>
<keyword id="KW-0539">Nucleus</keyword>
<keyword id="KW-0597">Phosphoprotein</keyword>
<keyword id="KW-1267">Proteomics identification</keyword>
<keyword id="KW-1185">Reference proteome</keyword>
<keyword id="KW-0808">Transferase</keyword>
<keyword id="KW-0829">Tyrosine-protein kinase</keyword>